<sequence>MAKTIKITQTRSAIGRLPKHKATLLGLGLRRIGHTVEREDTPAVRGMVNAVSFMVKVEE</sequence>
<gene>
    <name evidence="1" type="primary">rpmD</name>
    <name type="ordered locus">KPK_0416</name>
</gene>
<name>RL30_KLEP3</name>
<feature type="chain" id="PRO_1000144691" description="Large ribosomal subunit protein uL30">
    <location>
        <begin position="1"/>
        <end position="59"/>
    </location>
</feature>
<protein>
    <recommendedName>
        <fullName evidence="1">Large ribosomal subunit protein uL30</fullName>
    </recommendedName>
    <alternativeName>
        <fullName evidence="2">50S ribosomal protein L30</fullName>
    </alternativeName>
</protein>
<accession>B5XNB1</accession>
<reference key="1">
    <citation type="journal article" date="2008" name="PLoS Genet.">
        <title>Complete genome sequence of the N2-fixing broad host range endophyte Klebsiella pneumoniae 342 and virulence predictions verified in mice.</title>
        <authorList>
            <person name="Fouts D.E."/>
            <person name="Tyler H.L."/>
            <person name="DeBoy R.T."/>
            <person name="Daugherty S."/>
            <person name="Ren Q."/>
            <person name="Badger J.H."/>
            <person name="Durkin A.S."/>
            <person name="Huot H."/>
            <person name="Shrivastava S."/>
            <person name="Kothari S."/>
            <person name="Dodson R.J."/>
            <person name="Mohamoud Y."/>
            <person name="Khouri H."/>
            <person name="Roesch L.F.W."/>
            <person name="Krogfelt K.A."/>
            <person name="Struve C."/>
            <person name="Triplett E.W."/>
            <person name="Methe B.A."/>
        </authorList>
    </citation>
    <scope>NUCLEOTIDE SEQUENCE [LARGE SCALE GENOMIC DNA]</scope>
    <source>
        <strain>342</strain>
    </source>
</reference>
<evidence type="ECO:0000255" key="1">
    <source>
        <dbReference type="HAMAP-Rule" id="MF_01371"/>
    </source>
</evidence>
<evidence type="ECO:0000305" key="2"/>
<keyword id="KW-0687">Ribonucleoprotein</keyword>
<keyword id="KW-0689">Ribosomal protein</keyword>
<dbReference type="EMBL" id="CP000964">
    <property type="protein sequence ID" value="ACI10817.1"/>
    <property type="molecule type" value="Genomic_DNA"/>
</dbReference>
<dbReference type="SMR" id="B5XNB1"/>
<dbReference type="KEGG" id="kpe:KPK_0416"/>
<dbReference type="HOGENOM" id="CLU_131047_1_4_6"/>
<dbReference type="Proteomes" id="UP000001734">
    <property type="component" value="Chromosome"/>
</dbReference>
<dbReference type="GO" id="GO:0022625">
    <property type="term" value="C:cytosolic large ribosomal subunit"/>
    <property type="evidence" value="ECO:0007669"/>
    <property type="project" value="TreeGrafter"/>
</dbReference>
<dbReference type="GO" id="GO:0003735">
    <property type="term" value="F:structural constituent of ribosome"/>
    <property type="evidence" value="ECO:0007669"/>
    <property type="project" value="InterPro"/>
</dbReference>
<dbReference type="GO" id="GO:0006412">
    <property type="term" value="P:translation"/>
    <property type="evidence" value="ECO:0007669"/>
    <property type="project" value="UniProtKB-UniRule"/>
</dbReference>
<dbReference type="CDD" id="cd01658">
    <property type="entry name" value="Ribosomal_L30"/>
    <property type="match status" value="1"/>
</dbReference>
<dbReference type="FunFam" id="3.30.1390.20:FF:000001">
    <property type="entry name" value="50S ribosomal protein L30"/>
    <property type="match status" value="1"/>
</dbReference>
<dbReference type="Gene3D" id="3.30.1390.20">
    <property type="entry name" value="Ribosomal protein L30, ferredoxin-like fold domain"/>
    <property type="match status" value="1"/>
</dbReference>
<dbReference type="HAMAP" id="MF_01371_B">
    <property type="entry name" value="Ribosomal_uL30_B"/>
    <property type="match status" value="1"/>
</dbReference>
<dbReference type="InterPro" id="IPR036919">
    <property type="entry name" value="Ribo_uL30_ferredoxin-like_sf"/>
</dbReference>
<dbReference type="InterPro" id="IPR005996">
    <property type="entry name" value="Ribosomal_uL30_bac-type"/>
</dbReference>
<dbReference type="InterPro" id="IPR018038">
    <property type="entry name" value="Ribosomal_uL30_CS"/>
</dbReference>
<dbReference type="InterPro" id="IPR016082">
    <property type="entry name" value="Ribosomal_uL30_ferredoxin-like"/>
</dbReference>
<dbReference type="NCBIfam" id="TIGR01308">
    <property type="entry name" value="rpmD_bact"/>
    <property type="match status" value="1"/>
</dbReference>
<dbReference type="PANTHER" id="PTHR15892:SF2">
    <property type="entry name" value="LARGE RIBOSOMAL SUBUNIT PROTEIN UL30M"/>
    <property type="match status" value="1"/>
</dbReference>
<dbReference type="PANTHER" id="PTHR15892">
    <property type="entry name" value="MITOCHONDRIAL RIBOSOMAL PROTEIN L30"/>
    <property type="match status" value="1"/>
</dbReference>
<dbReference type="Pfam" id="PF00327">
    <property type="entry name" value="Ribosomal_L30"/>
    <property type="match status" value="1"/>
</dbReference>
<dbReference type="PIRSF" id="PIRSF002211">
    <property type="entry name" value="Ribosomal_L30_bac-type"/>
    <property type="match status" value="1"/>
</dbReference>
<dbReference type="SUPFAM" id="SSF55129">
    <property type="entry name" value="Ribosomal protein L30p/L7e"/>
    <property type="match status" value="1"/>
</dbReference>
<dbReference type="PROSITE" id="PS00634">
    <property type="entry name" value="RIBOSOMAL_L30"/>
    <property type="match status" value="1"/>
</dbReference>
<organism>
    <name type="scientific">Klebsiella pneumoniae (strain 342)</name>
    <dbReference type="NCBI Taxonomy" id="507522"/>
    <lineage>
        <taxon>Bacteria</taxon>
        <taxon>Pseudomonadati</taxon>
        <taxon>Pseudomonadota</taxon>
        <taxon>Gammaproteobacteria</taxon>
        <taxon>Enterobacterales</taxon>
        <taxon>Enterobacteriaceae</taxon>
        <taxon>Klebsiella/Raoultella group</taxon>
        <taxon>Klebsiella</taxon>
        <taxon>Klebsiella pneumoniae complex</taxon>
    </lineage>
</organism>
<proteinExistence type="inferred from homology"/>
<comment type="subunit">
    <text evidence="1">Part of the 50S ribosomal subunit.</text>
</comment>
<comment type="similarity">
    <text evidence="1">Belongs to the universal ribosomal protein uL30 family.</text>
</comment>